<dbReference type="EMBL" id="CP000660">
    <property type="protein sequence ID" value="ABP51163.1"/>
    <property type="molecule type" value="Genomic_DNA"/>
</dbReference>
<dbReference type="SMR" id="A4WL96"/>
<dbReference type="STRING" id="340102.Pars_1609"/>
<dbReference type="KEGG" id="pas:Pars_1609"/>
<dbReference type="HOGENOM" id="CLU_112570_3_1_2"/>
<dbReference type="OrthoDB" id="10127at2157"/>
<dbReference type="PhylomeDB" id="A4WL96"/>
<dbReference type="Proteomes" id="UP000001567">
    <property type="component" value="Chromosome"/>
</dbReference>
<dbReference type="GO" id="GO:0022625">
    <property type="term" value="C:cytosolic large ribosomal subunit"/>
    <property type="evidence" value="ECO:0007669"/>
    <property type="project" value="TreeGrafter"/>
</dbReference>
<dbReference type="GO" id="GO:0003735">
    <property type="term" value="F:structural constituent of ribosome"/>
    <property type="evidence" value="ECO:0007669"/>
    <property type="project" value="InterPro"/>
</dbReference>
<dbReference type="GO" id="GO:0002181">
    <property type="term" value="P:cytoplasmic translation"/>
    <property type="evidence" value="ECO:0007669"/>
    <property type="project" value="TreeGrafter"/>
</dbReference>
<dbReference type="CDD" id="cd00463">
    <property type="entry name" value="Ribosomal_L31e"/>
    <property type="match status" value="1"/>
</dbReference>
<dbReference type="Gene3D" id="3.10.440.10">
    <property type="match status" value="1"/>
</dbReference>
<dbReference type="HAMAP" id="MF_00410">
    <property type="entry name" value="Ribosomal_eL31"/>
    <property type="match status" value="1"/>
</dbReference>
<dbReference type="InterPro" id="IPR000054">
    <property type="entry name" value="Ribosomal_eL31"/>
</dbReference>
<dbReference type="InterPro" id="IPR023621">
    <property type="entry name" value="Ribosomal_eL31_dom_sf"/>
</dbReference>
<dbReference type="NCBIfam" id="NF002258">
    <property type="entry name" value="PRK01192.1-1"/>
    <property type="match status" value="1"/>
</dbReference>
<dbReference type="PANTHER" id="PTHR10956">
    <property type="entry name" value="60S RIBOSOMAL PROTEIN L31"/>
    <property type="match status" value="1"/>
</dbReference>
<dbReference type="PANTHER" id="PTHR10956:SF0">
    <property type="entry name" value="60S RIBOSOMAL PROTEIN L31"/>
    <property type="match status" value="1"/>
</dbReference>
<dbReference type="Pfam" id="PF01198">
    <property type="entry name" value="Ribosomal_L31e"/>
    <property type="match status" value="1"/>
</dbReference>
<dbReference type="SMART" id="SM01380">
    <property type="entry name" value="Ribosomal_L31e"/>
    <property type="match status" value="1"/>
</dbReference>
<dbReference type="SUPFAM" id="SSF54575">
    <property type="entry name" value="Ribosomal protein L31e"/>
    <property type="match status" value="1"/>
</dbReference>
<evidence type="ECO:0000255" key="1">
    <source>
        <dbReference type="HAMAP-Rule" id="MF_00410"/>
    </source>
</evidence>
<evidence type="ECO:0000305" key="2"/>
<feature type="chain" id="PRO_1000049920" description="Large ribosomal subunit protein eL31">
    <location>
        <begin position="1"/>
        <end position="92"/>
    </location>
</feature>
<sequence>MSEEKKVVLTREYVVNLRRAYEVSRTKRAKYAVGLIRRFVARHLKVESKNVRIGQALNEVLWMRSIEKPPRKVRVVVEKLSDGTVKVDLKNV</sequence>
<organism>
    <name type="scientific">Pyrobaculum arsenaticum (strain DSM 13514 / JCM 11321 / PZ6)</name>
    <dbReference type="NCBI Taxonomy" id="340102"/>
    <lineage>
        <taxon>Archaea</taxon>
        <taxon>Thermoproteota</taxon>
        <taxon>Thermoprotei</taxon>
        <taxon>Thermoproteales</taxon>
        <taxon>Thermoproteaceae</taxon>
        <taxon>Pyrobaculum</taxon>
    </lineage>
</organism>
<accession>A4WL96</accession>
<comment type="similarity">
    <text evidence="1">Belongs to the eukaryotic ribosomal protein eL31 family.</text>
</comment>
<protein>
    <recommendedName>
        <fullName evidence="1">Large ribosomal subunit protein eL31</fullName>
    </recommendedName>
    <alternativeName>
        <fullName evidence="2">50S ribosomal protein L31e</fullName>
    </alternativeName>
</protein>
<name>RL31_PYRAR</name>
<reference key="1">
    <citation type="submission" date="2007-04" db="EMBL/GenBank/DDBJ databases">
        <title>Complete sequence of Pyrobaculum arsenaticum DSM 13514.</title>
        <authorList>
            <consortium name="US DOE Joint Genome Institute"/>
            <person name="Copeland A."/>
            <person name="Lucas S."/>
            <person name="Lapidus A."/>
            <person name="Barry K."/>
            <person name="Glavina del Rio T."/>
            <person name="Dalin E."/>
            <person name="Tice H."/>
            <person name="Pitluck S."/>
            <person name="Chain P."/>
            <person name="Malfatti S."/>
            <person name="Shin M."/>
            <person name="Vergez L."/>
            <person name="Schmutz J."/>
            <person name="Larimer F."/>
            <person name="Land M."/>
            <person name="Hauser L."/>
            <person name="Kyrpides N."/>
            <person name="Mikhailova N."/>
            <person name="Cozen A.E."/>
            <person name="Fitz-Gibbon S.T."/>
            <person name="House C.H."/>
            <person name="Saltikov C."/>
            <person name="Lowe T.M."/>
            <person name="Richardson P."/>
        </authorList>
    </citation>
    <scope>NUCLEOTIDE SEQUENCE [LARGE SCALE GENOMIC DNA]</scope>
    <source>
        <strain>ATCC 700994 / DSM 13514 / JCM 11321 / PZ6</strain>
    </source>
</reference>
<keyword id="KW-0687">Ribonucleoprotein</keyword>
<keyword id="KW-0689">Ribosomal protein</keyword>
<proteinExistence type="inferred from homology"/>
<gene>
    <name evidence="1" type="primary">rpl31e</name>
    <name type="ordered locus">Pars_1609</name>
</gene>